<dbReference type="EMBL" id="AF522339">
    <property type="protein sequence ID" value="AAQ08843.1"/>
    <property type="molecule type" value="Genomic_DNA"/>
</dbReference>
<dbReference type="GO" id="GO:0005743">
    <property type="term" value="C:mitochondrial inner membrane"/>
    <property type="evidence" value="ECO:0007669"/>
    <property type="project" value="UniProtKB-SubCell"/>
</dbReference>
<dbReference type="GO" id="GO:0045275">
    <property type="term" value="C:respiratory chain complex III"/>
    <property type="evidence" value="ECO:0007669"/>
    <property type="project" value="InterPro"/>
</dbReference>
<dbReference type="GO" id="GO:0046872">
    <property type="term" value="F:metal ion binding"/>
    <property type="evidence" value="ECO:0007669"/>
    <property type="project" value="UniProtKB-KW"/>
</dbReference>
<dbReference type="GO" id="GO:0008121">
    <property type="term" value="F:ubiquinol-cytochrome-c reductase activity"/>
    <property type="evidence" value="ECO:0007669"/>
    <property type="project" value="InterPro"/>
</dbReference>
<dbReference type="GO" id="GO:0006122">
    <property type="term" value="P:mitochondrial electron transport, ubiquinol to cytochrome c"/>
    <property type="evidence" value="ECO:0007669"/>
    <property type="project" value="TreeGrafter"/>
</dbReference>
<dbReference type="CDD" id="cd00290">
    <property type="entry name" value="cytochrome_b_C"/>
    <property type="match status" value="1"/>
</dbReference>
<dbReference type="CDD" id="cd00284">
    <property type="entry name" value="Cytochrome_b_N"/>
    <property type="match status" value="1"/>
</dbReference>
<dbReference type="FunFam" id="1.20.810.10:FF:000002">
    <property type="entry name" value="Cytochrome b"/>
    <property type="match status" value="1"/>
</dbReference>
<dbReference type="Gene3D" id="1.20.810.10">
    <property type="entry name" value="Cytochrome Bc1 Complex, Chain C"/>
    <property type="match status" value="1"/>
</dbReference>
<dbReference type="InterPro" id="IPR005798">
    <property type="entry name" value="Cyt_b/b6_C"/>
</dbReference>
<dbReference type="InterPro" id="IPR036150">
    <property type="entry name" value="Cyt_b/b6_C_sf"/>
</dbReference>
<dbReference type="InterPro" id="IPR005797">
    <property type="entry name" value="Cyt_b/b6_N"/>
</dbReference>
<dbReference type="InterPro" id="IPR027387">
    <property type="entry name" value="Cytb/b6-like_sf"/>
</dbReference>
<dbReference type="InterPro" id="IPR030689">
    <property type="entry name" value="Cytochrome_b"/>
</dbReference>
<dbReference type="InterPro" id="IPR048260">
    <property type="entry name" value="Cytochrome_b_C_euk/bac"/>
</dbReference>
<dbReference type="InterPro" id="IPR048259">
    <property type="entry name" value="Cytochrome_b_N_euk/bac"/>
</dbReference>
<dbReference type="InterPro" id="IPR016174">
    <property type="entry name" value="Di-haem_cyt_TM"/>
</dbReference>
<dbReference type="PANTHER" id="PTHR19271">
    <property type="entry name" value="CYTOCHROME B"/>
    <property type="match status" value="1"/>
</dbReference>
<dbReference type="PANTHER" id="PTHR19271:SF16">
    <property type="entry name" value="CYTOCHROME B"/>
    <property type="match status" value="1"/>
</dbReference>
<dbReference type="Pfam" id="PF00032">
    <property type="entry name" value="Cytochrom_B_C"/>
    <property type="match status" value="1"/>
</dbReference>
<dbReference type="Pfam" id="PF00033">
    <property type="entry name" value="Cytochrome_B"/>
    <property type="match status" value="1"/>
</dbReference>
<dbReference type="PIRSF" id="PIRSF038885">
    <property type="entry name" value="COB"/>
    <property type="match status" value="1"/>
</dbReference>
<dbReference type="SUPFAM" id="SSF81648">
    <property type="entry name" value="a domain/subunit of cytochrome bc1 complex (Ubiquinol-cytochrome c reductase)"/>
    <property type="match status" value="1"/>
</dbReference>
<dbReference type="SUPFAM" id="SSF81342">
    <property type="entry name" value="Transmembrane di-heme cytochromes"/>
    <property type="match status" value="1"/>
</dbReference>
<dbReference type="PROSITE" id="PS51003">
    <property type="entry name" value="CYTB_CTER"/>
    <property type="match status" value="1"/>
</dbReference>
<dbReference type="PROSITE" id="PS51002">
    <property type="entry name" value="CYTB_NTER"/>
    <property type="match status" value="1"/>
</dbReference>
<evidence type="ECO:0000250" key="1"/>
<evidence type="ECO:0000250" key="2">
    <source>
        <dbReference type="UniProtKB" id="P00157"/>
    </source>
</evidence>
<evidence type="ECO:0000255" key="3">
    <source>
        <dbReference type="PROSITE-ProRule" id="PRU00967"/>
    </source>
</evidence>
<evidence type="ECO:0000255" key="4">
    <source>
        <dbReference type="PROSITE-ProRule" id="PRU00968"/>
    </source>
</evidence>
<feature type="chain" id="PRO_0000254697" description="Cytochrome b">
    <location>
        <begin position="1"/>
        <end position="379"/>
    </location>
</feature>
<feature type="transmembrane region" description="Helical" evidence="2">
    <location>
        <begin position="33"/>
        <end position="53"/>
    </location>
</feature>
<feature type="transmembrane region" description="Helical" evidence="2">
    <location>
        <begin position="77"/>
        <end position="98"/>
    </location>
</feature>
<feature type="transmembrane region" description="Helical" evidence="2">
    <location>
        <begin position="113"/>
        <end position="133"/>
    </location>
</feature>
<feature type="transmembrane region" description="Helical" evidence="2">
    <location>
        <begin position="178"/>
        <end position="198"/>
    </location>
</feature>
<feature type="transmembrane region" description="Helical" evidence="2">
    <location>
        <begin position="226"/>
        <end position="246"/>
    </location>
</feature>
<feature type="transmembrane region" description="Helical" evidence="2">
    <location>
        <begin position="288"/>
        <end position="308"/>
    </location>
</feature>
<feature type="transmembrane region" description="Helical" evidence="2">
    <location>
        <begin position="320"/>
        <end position="340"/>
    </location>
</feature>
<feature type="transmembrane region" description="Helical" evidence="2">
    <location>
        <begin position="347"/>
        <end position="367"/>
    </location>
</feature>
<feature type="binding site" description="axial binding residue" evidence="2">
    <location>
        <position position="83"/>
    </location>
    <ligand>
        <name>heme b</name>
        <dbReference type="ChEBI" id="CHEBI:60344"/>
        <label>b562</label>
    </ligand>
    <ligandPart>
        <name>Fe</name>
        <dbReference type="ChEBI" id="CHEBI:18248"/>
    </ligandPart>
</feature>
<feature type="binding site" description="axial binding residue" evidence="2">
    <location>
        <position position="97"/>
    </location>
    <ligand>
        <name>heme b</name>
        <dbReference type="ChEBI" id="CHEBI:60344"/>
        <label>b566</label>
    </ligand>
    <ligandPart>
        <name>Fe</name>
        <dbReference type="ChEBI" id="CHEBI:18248"/>
    </ligandPart>
</feature>
<feature type="binding site" description="axial binding residue" evidence="2">
    <location>
        <position position="182"/>
    </location>
    <ligand>
        <name>heme b</name>
        <dbReference type="ChEBI" id="CHEBI:60344"/>
        <label>b562</label>
    </ligand>
    <ligandPart>
        <name>Fe</name>
        <dbReference type="ChEBI" id="CHEBI:18248"/>
    </ligandPart>
</feature>
<feature type="binding site" description="axial binding residue" evidence="2">
    <location>
        <position position="196"/>
    </location>
    <ligand>
        <name>heme b</name>
        <dbReference type="ChEBI" id="CHEBI:60344"/>
        <label>b566</label>
    </ligand>
    <ligandPart>
        <name>Fe</name>
        <dbReference type="ChEBI" id="CHEBI:18248"/>
    </ligandPart>
</feature>
<feature type="binding site" evidence="2">
    <location>
        <position position="201"/>
    </location>
    <ligand>
        <name>a ubiquinone</name>
        <dbReference type="ChEBI" id="CHEBI:16389"/>
    </ligand>
</feature>
<reference key="1">
    <citation type="journal article" date="2004" name="Mol. Phylogenet. Evol.">
        <title>Molecular systematics and origin of sociality in mongooses (Herpestidae, Carnivora).</title>
        <authorList>
            <person name="Veron G."/>
            <person name="Colyn M."/>
            <person name="Dunham A.E."/>
            <person name="Taylor P."/>
            <person name="Gaubert P."/>
        </authorList>
    </citation>
    <scope>NUCLEOTIDE SEQUENCE [GENOMIC DNA]</scope>
</reference>
<protein>
    <recommendedName>
        <fullName>Cytochrome b</fullName>
    </recommendedName>
    <alternativeName>
        <fullName>Complex III subunit 3</fullName>
    </alternativeName>
    <alternativeName>
        <fullName>Complex III subunit III</fullName>
    </alternativeName>
    <alternativeName>
        <fullName>Cytochrome b-c1 complex subunit 3</fullName>
    </alternativeName>
    <alternativeName>
        <fullName>Ubiquinol-cytochrome-c reductase complex cytochrome b subunit</fullName>
    </alternativeName>
</protein>
<accession>Q71E97</accession>
<keyword id="KW-0249">Electron transport</keyword>
<keyword id="KW-0349">Heme</keyword>
<keyword id="KW-0408">Iron</keyword>
<keyword id="KW-0472">Membrane</keyword>
<keyword id="KW-0479">Metal-binding</keyword>
<keyword id="KW-0496">Mitochondrion</keyword>
<keyword id="KW-0999">Mitochondrion inner membrane</keyword>
<keyword id="KW-0679">Respiratory chain</keyword>
<keyword id="KW-0812">Transmembrane</keyword>
<keyword id="KW-1133">Transmembrane helix</keyword>
<keyword id="KW-0813">Transport</keyword>
<keyword id="KW-0830">Ubiquinone</keyword>
<comment type="function">
    <text evidence="2">Component of the ubiquinol-cytochrome c reductase complex (complex III or cytochrome b-c1 complex) that is part of the mitochondrial respiratory chain. The b-c1 complex mediates electron transfer from ubiquinol to cytochrome c. Contributes to the generation of a proton gradient across the mitochondrial membrane that is then used for ATP synthesis.</text>
</comment>
<comment type="cofactor">
    <cofactor evidence="2">
        <name>heme b</name>
        <dbReference type="ChEBI" id="CHEBI:60344"/>
    </cofactor>
    <text evidence="2">Binds 2 heme b groups non-covalently.</text>
</comment>
<comment type="subunit">
    <text evidence="2">The cytochrome bc1 complex contains 11 subunits: 3 respiratory subunits (MT-CYB, CYC1 and UQCRFS1), 2 core proteins (UQCRC1 and UQCRC2) and 6 low-molecular weight proteins (UQCRH/QCR6, UQCRB/QCR7, UQCRQ/QCR8, UQCR10/QCR9, UQCR11/QCR10 and a cleavage product of UQCRFS1). This cytochrome bc1 complex then forms a dimer.</text>
</comment>
<comment type="subcellular location">
    <subcellularLocation>
        <location evidence="2">Mitochondrion inner membrane</location>
        <topology evidence="2">Multi-pass membrane protein</topology>
    </subcellularLocation>
</comment>
<comment type="miscellaneous">
    <text evidence="1">Heme 1 (or BL or b562) is low-potential and absorbs at about 562 nm, and heme 2 (or BH or b566) is high-potential and absorbs at about 566 nm.</text>
</comment>
<comment type="similarity">
    <text evidence="3 4">Belongs to the cytochrome b family.</text>
</comment>
<comment type="caution">
    <text evidence="2">The full-length protein contains only eight transmembrane helices, not nine as predicted by bioinformatics tools.</text>
</comment>
<gene>
    <name type="primary">MT-CYB</name>
    <name type="synonym">COB</name>
    <name type="synonym">CYTB</name>
    <name type="synonym">MTCYB</name>
</gene>
<organism>
    <name type="scientific">Herpestes naso</name>
    <name type="common">Long-nosed mongoose</name>
    <dbReference type="NCBI Taxonomy" id="3082990"/>
    <lineage>
        <taxon>Eukaryota</taxon>
        <taxon>Metazoa</taxon>
        <taxon>Chordata</taxon>
        <taxon>Craniata</taxon>
        <taxon>Vertebrata</taxon>
        <taxon>Euteleostomi</taxon>
        <taxon>Mammalia</taxon>
        <taxon>Eutheria</taxon>
        <taxon>Laurasiatheria</taxon>
        <taxon>Carnivora</taxon>
        <taxon>Feliformia</taxon>
        <taxon>Herpestidae</taxon>
        <taxon>Xenogale</taxon>
    </lineage>
</organism>
<name>CYB_HERNA</name>
<sequence length="379" mass="42510">MTNIRKSHPLIKIVNESFIDLPAPSNISAWWNFGSLLGVCLILQILTGLFLAMHYTSDTATAFSSVTHICRDVNYGWIIRYMHANGASLFFICLFMHAGRGMYYGSYTFMETWNIGILLLFTVMATAFMGYVLPWGQMSFWXATVITNLLSAIPYIGTNLVEWIWGGFSVDKATLTRFFAFHFILPFIISALAAVHLLFLHETGSNNPSGVSSDSDKIPFHPYYTIKDILGLLIMLMVLMTLVLFSPDLLGDPDNYTPANPLNTPPHIKPEWYFLFAYAILRSIPNKLGGVLALALSIMILAIVPLLHTSNQRGMMFRPLSQCLFWLLVADLLTLTWIGGQPVEHPFIAIGQLASVLYFSIILVLMPISGTIENQLLKW</sequence>
<geneLocation type="mitochondrion"/>
<proteinExistence type="inferred from homology"/>